<keyword id="KW-0028">Amino-acid biosynthesis</keyword>
<keyword id="KW-0032">Aminotransferase</keyword>
<keyword id="KW-0963">Cytoplasm</keyword>
<keyword id="KW-0663">Pyridoxal phosphate</keyword>
<keyword id="KW-0664">Pyridoxine biosynthesis</keyword>
<keyword id="KW-0718">Serine biosynthesis</keyword>
<keyword id="KW-0808">Transferase</keyword>
<gene>
    <name evidence="1" type="primary">serC</name>
    <name type="ordered locus">Spro_1706</name>
</gene>
<comment type="function">
    <text evidence="1">Catalyzes the reversible conversion of 3-phosphohydroxypyruvate to phosphoserine and of 3-hydroxy-2-oxo-4-phosphonooxybutanoate to phosphohydroxythreonine.</text>
</comment>
<comment type="catalytic activity">
    <reaction evidence="1">
        <text>O-phospho-L-serine + 2-oxoglutarate = 3-phosphooxypyruvate + L-glutamate</text>
        <dbReference type="Rhea" id="RHEA:14329"/>
        <dbReference type="ChEBI" id="CHEBI:16810"/>
        <dbReference type="ChEBI" id="CHEBI:18110"/>
        <dbReference type="ChEBI" id="CHEBI:29985"/>
        <dbReference type="ChEBI" id="CHEBI:57524"/>
        <dbReference type="EC" id="2.6.1.52"/>
    </reaction>
</comment>
<comment type="catalytic activity">
    <reaction evidence="1">
        <text>4-(phosphooxy)-L-threonine + 2-oxoglutarate = (R)-3-hydroxy-2-oxo-4-phosphooxybutanoate + L-glutamate</text>
        <dbReference type="Rhea" id="RHEA:16573"/>
        <dbReference type="ChEBI" id="CHEBI:16810"/>
        <dbReference type="ChEBI" id="CHEBI:29985"/>
        <dbReference type="ChEBI" id="CHEBI:58452"/>
        <dbReference type="ChEBI" id="CHEBI:58538"/>
        <dbReference type="EC" id="2.6.1.52"/>
    </reaction>
</comment>
<comment type="cofactor">
    <cofactor evidence="1">
        <name>pyridoxal 5'-phosphate</name>
        <dbReference type="ChEBI" id="CHEBI:597326"/>
    </cofactor>
    <text evidence="1">Binds 1 pyridoxal phosphate per subunit.</text>
</comment>
<comment type="pathway">
    <text evidence="1">Amino-acid biosynthesis; L-serine biosynthesis; L-serine from 3-phospho-D-glycerate: step 2/3.</text>
</comment>
<comment type="pathway">
    <text evidence="1">Cofactor biosynthesis; pyridoxine 5'-phosphate biosynthesis; pyridoxine 5'-phosphate from D-erythrose 4-phosphate: step 3/5.</text>
</comment>
<comment type="subunit">
    <text evidence="1">Homodimer.</text>
</comment>
<comment type="subcellular location">
    <subcellularLocation>
        <location evidence="1">Cytoplasm</location>
    </subcellularLocation>
</comment>
<comment type="similarity">
    <text evidence="1">Belongs to the class-V pyridoxal-phosphate-dependent aminotransferase family. SerC subfamily.</text>
</comment>
<evidence type="ECO:0000255" key="1">
    <source>
        <dbReference type="HAMAP-Rule" id="MF_00160"/>
    </source>
</evidence>
<feature type="chain" id="PRO_1000203560" description="Phosphoserine aminotransferase">
    <location>
        <begin position="1"/>
        <end position="361"/>
    </location>
</feature>
<feature type="binding site" evidence="1">
    <location>
        <position position="9"/>
    </location>
    <ligand>
        <name>L-glutamate</name>
        <dbReference type="ChEBI" id="CHEBI:29985"/>
    </ligand>
</feature>
<feature type="binding site" evidence="1">
    <location>
        <position position="42"/>
    </location>
    <ligand>
        <name>L-glutamate</name>
        <dbReference type="ChEBI" id="CHEBI:29985"/>
    </ligand>
</feature>
<feature type="binding site" evidence="1">
    <location>
        <begin position="76"/>
        <end position="77"/>
    </location>
    <ligand>
        <name>pyridoxal 5'-phosphate</name>
        <dbReference type="ChEBI" id="CHEBI:597326"/>
    </ligand>
</feature>
<feature type="binding site" evidence="1">
    <location>
        <position position="102"/>
    </location>
    <ligand>
        <name>pyridoxal 5'-phosphate</name>
        <dbReference type="ChEBI" id="CHEBI:597326"/>
    </ligand>
</feature>
<feature type="binding site" evidence="1">
    <location>
        <position position="153"/>
    </location>
    <ligand>
        <name>pyridoxal 5'-phosphate</name>
        <dbReference type="ChEBI" id="CHEBI:597326"/>
    </ligand>
</feature>
<feature type="binding site" evidence="1">
    <location>
        <position position="173"/>
    </location>
    <ligand>
        <name>pyridoxal 5'-phosphate</name>
        <dbReference type="ChEBI" id="CHEBI:597326"/>
    </ligand>
</feature>
<feature type="binding site" evidence="1">
    <location>
        <position position="196"/>
    </location>
    <ligand>
        <name>pyridoxal 5'-phosphate</name>
        <dbReference type="ChEBI" id="CHEBI:597326"/>
    </ligand>
</feature>
<feature type="binding site" evidence="1">
    <location>
        <begin position="238"/>
        <end position="239"/>
    </location>
    <ligand>
        <name>pyridoxal 5'-phosphate</name>
        <dbReference type="ChEBI" id="CHEBI:597326"/>
    </ligand>
</feature>
<feature type="modified residue" description="N6-(pyridoxal phosphate)lysine" evidence="1">
    <location>
        <position position="197"/>
    </location>
</feature>
<proteinExistence type="inferred from homology"/>
<name>SERC_SERP5</name>
<sequence length="361" mass="40031">MTQVYNFSSGPAMLPVEVLRRAEQELCNWHGLGTSVMEISHRSKEFIEVAQQSEQDLRDLLKIPSNYKVLFCHGGARAQFAALPLNLLGDKTTADYIDGGYWAHSAITEAQKYCTPNTIDVKTSVDGLLGIKPMKEWQLSDDAAYVHYCPNETIDGVAIDELPDFGDKVVIGDYSSTILSGPLDVSRFGVIYAGAQKNIGPAGLTLVIVREDLLGKARREVPSILDYTVLAENDSMFNTPPTFAWYLSGLVFKWLKEQGGLVEMHKRNQAKAELLYATIDKSDFYRSRVALANRSWMNVPFQLADPALDKVFLSEAEAIGLQALKGHRVVGGMRASIYNAMPLAGVKTLTDFMVDFERRHG</sequence>
<accession>A8GCH0</accession>
<dbReference type="EC" id="2.6.1.52" evidence="1"/>
<dbReference type="EMBL" id="CP000826">
    <property type="protein sequence ID" value="ABV40810.1"/>
    <property type="molecule type" value="Genomic_DNA"/>
</dbReference>
<dbReference type="SMR" id="A8GCH0"/>
<dbReference type="STRING" id="399741.Spro_1706"/>
<dbReference type="KEGG" id="spe:Spro_1706"/>
<dbReference type="eggNOG" id="COG1932">
    <property type="taxonomic scope" value="Bacteria"/>
</dbReference>
<dbReference type="HOGENOM" id="CLU_034866_0_2_6"/>
<dbReference type="OrthoDB" id="9809412at2"/>
<dbReference type="UniPathway" id="UPA00135">
    <property type="reaction ID" value="UER00197"/>
</dbReference>
<dbReference type="UniPathway" id="UPA00244">
    <property type="reaction ID" value="UER00311"/>
</dbReference>
<dbReference type="GO" id="GO:0005737">
    <property type="term" value="C:cytoplasm"/>
    <property type="evidence" value="ECO:0007669"/>
    <property type="project" value="UniProtKB-SubCell"/>
</dbReference>
<dbReference type="GO" id="GO:0004648">
    <property type="term" value="F:O-phospho-L-serine:2-oxoglutarate aminotransferase activity"/>
    <property type="evidence" value="ECO:0007669"/>
    <property type="project" value="UniProtKB-UniRule"/>
</dbReference>
<dbReference type="GO" id="GO:0030170">
    <property type="term" value="F:pyridoxal phosphate binding"/>
    <property type="evidence" value="ECO:0007669"/>
    <property type="project" value="UniProtKB-UniRule"/>
</dbReference>
<dbReference type="GO" id="GO:0006564">
    <property type="term" value="P:L-serine biosynthetic process"/>
    <property type="evidence" value="ECO:0007669"/>
    <property type="project" value="UniProtKB-UniRule"/>
</dbReference>
<dbReference type="GO" id="GO:0008615">
    <property type="term" value="P:pyridoxine biosynthetic process"/>
    <property type="evidence" value="ECO:0007669"/>
    <property type="project" value="UniProtKB-UniRule"/>
</dbReference>
<dbReference type="CDD" id="cd00611">
    <property type="entry name" value="PSAT_like"/>
    <property type="match status" value="1"/>
</dbReference>
<dbReference type="FunFam" id="3.40.640.10:FF:000010">
    <property type="entry name" value="Phosphoserine aminotransferase"/>
    <property type="match status" value="1"/>
</dbReference>
<dbReference type="FunFam" id="3.90.1150.10:FF:000006">
    <property type="entry name" value="Phosphoserine aminotransferase"/>
    <property type="match status" value="1"/>
</dbReference>
<dbReference type="Gene3D" id="3.90.1150.10">
    <property type="entry name" value="Aspartate Aminotransferase, domain 1"/>
    <property type="match status" value="1"/>
</dbReference>
<dbReference type="Gene3D" id="3.40.640.10">
    <property type="entry name" value="Type I PLP-dependent aspartate aminotransferase-like (Major domain)"/>
    <property type="match status" value="1"/>
</dbReference>
<dbReference type="HAMAP" id="MF_00160">
    <property type="entry name" value="SerC_aminotrans_5"/>
    <property type="match status" value="1"/>
</dbReference>
<dbReference type="InterPro" id="IPR000192">
    <property type="entry name" value="Aminotrans_V_dom"/>
</dbReference>
<dbReference type="InterPro" id="IPR020578">
    <property type="entry name" value="Aminotrans_V_PyrdxlP_BS"/>
</dbReference>
<dbReference type="InterPro" id="IPR022278">
    <property type="entry name" value="Pser_aminoTfrase"/>
</dbReference>
<dbReference type="InterPro" id="IPR015424">
    <property type="entry name" value="PyrdxlP-dep_Trfase"/>
</dbReference>
<dbReference type="InterPro" id="IPR015421">
    <property type="entry name" value="PyrdxlP-dep_Trfase_major"/>
</dbReference>
<dbReference type="InterPro" id="IPR015422">
    <property type="entry name" value="PyrdxlP-dep_Trfase_small"/>
</dbReference>
<dbReference type="NCBIfam" id="NF003764">
    <property type="entry name" value="PRK05355.1"/>
    <property type="match status" value="1"/>
</dbReference>
<dbReference type="NCBIfam" id="TIGR01364">
    <property type="entry name" value="serC_1"/>
    <property type="match status" value="1"/>
</dbReference>
<dbReference type="PANTHER" id="PTHR43247">
    <property type="entry name" value="PHOSPHOSERINE AMINOTRANSFERASE"/>
    <property type="match status" value="1"/>
</dbReference>
<dbReference type="PANTHER" id="PTHR43247:SF1">
    <property type="entry name" value="PHOSPHOSERINE AMINOTRANSFERASE"/>
    <property type="match status" value="1"/>
</dbReference>
<dbReference type="Pfam" id="PF00266">
    <property type="entry name" value="Aminotran_5"/>
    <property type="match status" value="1"/>
</dbReference>
<dbReference type="PIRSF" id="PIRSF000525">
    <property type="entry name" value="SerC"/>
    <property type="match status" value="1"/>
</dbReference>
<dbReference type="SUPFAM" id="SSF53383">
    <property type="entry name" value="PLP-dependent transferases"/>
    <property type="match status" value="1"/>
</dbReference>
<dbReference type="PROSITE" id="PS00595">
    <property type="entry name" value="AA_TRANSFER_CLASS_5"/>
    <property type="match status" value="1"/>
</dbReference>
<reference key="1">
    <citation type="submission" date="2007-09" db="EMBL/GenBank/DDBJ databases">
        <title>Complete sequence of chromosome of Serratia proteamaculans 568.</title>
        <authorList>
            <consortium name="US DOE Joint Genome Institute"/>
            <person name="Copeland A."/>
            <person name="Lucas S."/>
            <person name="Lapidus A."/>
            <person name="Barry K."/>
            <person name="Glavina del Rio T."/>
            <person name="Dalin E."/>
            <person name="Tice H."/>
            <person name="Pitluck S."/>
            <person name="Chain P."/>
            <person name="Malfatti S."/>
            <person name="Shin M."/>
            <person name="Vergez L."/>
            <person name="Schmutz J."/>
            <person name="Larimer F."/>
            <person name="Land M."/>
            <person name="Hauser L."/>
            <person name="Kyrpides N."/>
            <person name="Kim E."/>
            <person name="Taghavi S."/>
            <person name="Newman L."/>
            <person name="Vangronsveld J."/>
            <person name="van der Lelie D."/>
            <person name="Richardson P."/>
        </authorList>
    </citation>
    <scope>NUCLEOTIDE SEQUENCE [LARGE SCALE GENOMIC DNA]</scope>
    <source>
        <strain>568</strain>
    </source>
</reference>
<protein>
    <recommendedName>
        <fullName evidence="1">Phosphoserine aminotransferase</fullName>
        <ecNumber evidence="1">2.6.1.52</ecNumber>
    </recommendedName>
    <alternativeName>
        <fullName evidence="1">Phosphohydroxythreonine aminotransferase</fullName>
        <shortName evidence="1">PSAT</shortName>
    </alternativeName>
</protein>
<organism>
    <name type="scientific">Serratia proteamaculans (strain 568)</name>
    <dbReference type="NCBI Taxonomy" id="399741"/>
    <lineage>
        <taxon>Bacteria</taxon>
        <taxon>Pseudomonadati</taxon>
        <taxon>Pseudomonadota</taxon>
        <taxon>Gammaproteobacteria</taxon>
        <taxon>Enterobacterales</taxon>
        <taxon>Yersiniaceae</taxon>
        <taxon>Serratia</taxon>
    </lineage>
</organism>